<feature type="chain" id="PRO_1000144461" description="Large ribosomal subunit protein bL17">
    <location>
        <begin position="1"/>
        <end position="138"/>
    </location>
</feature>
<accession>B4R8P2</accession>
<sequence length="138" mass="15308">MRHGKAHRKLGRTSAHRTAMFANMSASLIKHEQIVTTLPKAKELRPFVEKLVTLAKRGDLHARRQAISHVRDVEQVGKLFAVLGPRYKDRNGGYIRVLKAGYRHGDNAPMAVIEFVDRDPAEKGKDSGPVAEAAFAEA</sequence>
<dbReference type="EMBL" id="CP000747">
    <property type="protein sequence ID" value="ACG77669.1"/>
    <property type="molecule type" value="Genomic_DNA"/>
</dbReference>
<dbReference type="RefSeq" id="WP_012521813.1">
    <property type="nucleotide sequence ID" value="NC_011144.1"/>
</dbReference>
<dbReference type="SMR" id="B4R8P2"/>
<dbReference type="STRING" id="450851.PHZ_c1255"/>
<dbReference type="KEGG" id="pzu:PHZ_c1255"/>
<dbReference type="eggNOG" id="COG0203">
    <property type="taxonomic scope" value="Bacteria"/>
</dbReference>
<dbReference type="HOGENOM" id="CLU_074407_2_2_5"/>
<dbReference type="OrthoDB" id="9809073at2"/>
<dbReference type="Proteomes" id="UP000001868">
    <property type="component" value="Chromosome"/>
</dbReference>
<dbReference type="GO" id="GO:0022625">
    <property type="term" value="C:cytosolic large ribosomal subunit"/>
    <property type="evidence" value="ECO:0007669"/>
    <property type="project" value="TreeGrafter"/>
</dbReference>
<dbReference type="GO" id="GO:0003735">
    <property type="term" value="F:structural constituent of ribosome"/>
    <property type="evidence" value="ECO:0007669"/>
    <property type="project" value="InterPro"/>
</dbReference>
<dbReference type="GO" id="GO:0006412">
    <property type="term" value="P:translation"/>
    <property type="evidence" value="ECO:0007669"/>
    <property type="project" value="UniProtKB-UniRule"/>
</dbReference>
<dbReference type="FunFam" id="3.90.1030.10:FF:000001">
    <property type="entry name" value="50S ribosomal protein L17"/>
    <property type="match status" value="1"/>
</dbReference>
<dbReference type="Gene3D" id="3.90.1030.10">
    <property type="entry name" value="Ribosomal protein L17"/>
    <property type="match status" value="1"/>
</dbReference>
<dbReference type="HAMAP" id="MF_01368">
    <property type="entry name" value="Ribosomal_bL17"/>
    <property type="match status" value="1"/>
</dbReference>
<dbReference type="InterPro" id="IPR000456">
    <property type="entry name" value="Ribosomal_bL17"/>
</dbReference>
<dbReference type="InterPro" id="IPR047859">
    <property type="entry name" value="Ribosomal_bL17_CS"/>
</dbReference>
<dbReference type="InterPro" id="IPR036373">
    <property type="entry name" value="Ribosomal_bL17_sf"/>
</dbReference>
<dbReference type="NCBIfam" id="TIGR00059">
    <property type="entry name" value="L17"/>
    <property type="match status" value="1"/>
</dbReference>
<dbReference type="PANTHER" id="PTHR14413:SF16">
    <property type="entry name" value="LARGE RIBOSOMAL SUBUNIT PROTEIN BL17M"/>
    <property type="match status" value="1"/>
</dbReference>
<dbReference type="PANTHER" id="PTHR14413">
    <property type="entry name" value="RIBOSOMAL PROTEIN L17"/>
    <property type="match status" value="1"/>
</dbReference>
<dbReference type="Pfam" id="PF01196">
    <property type="entry name" value="Ribosomal_L17"/>
    <property type="match status" value="1"/>
</dbReference>
<dbReference type="SUPFAM" id="SSF64263">
    <property type="entry name" value="Prokaryotic ribosomal protein L17"/>
    <property type="match status" value="1"/>
</dbReference>
<dbReference type="PROSITE" id="PS01167">
    <property type="entry name" value="RIBOSOMAL_L17"/>
    <property type="match status" value="1"/>
</dbReference>
<proteinExistence type="inferred from homology"/>
<reference key="1">
    <citation type="journal article" date="2008" name="BMC Genomics">
        <title>Complete genome of Phenylobacterium zucineum - a novel facultative intracellular bacterium isolated from human erythroleukemia cell line K562.</title>
        <authorList>
            <person name="Luo Y."/>
            <person name="Xu X."/>
            <person name="Ding Z."/>
            <person name="Liu Z."/>
            <person name="Zhang B."/>
            <person name="Yan Z."/>
            <person name="Sun J."/>
            <person name="Hu S."/>
            <person name="Hu X."/>
        </authorList>
    </citation>
    <scope>NUCLEOTIDE SEQUENCE [LARGE SCALE GENOMIC DNA]</scope>
    <source>
        <strain>HLK1</strain>
    </source>
</reference>
<organism>
    <name type="scientific">Phenylobacterium zucineum (strain HLK1)</name>
    <dbReference type="NCBI Taxonomy" id="450851"/>
    <lineage>
        <taxon>Bacteria</taxon>
        <taxon>Pseudomonadati</taxon>
        <taxon>Pseudomonadota</taxon>
        <taxon>Alphaproteobacteria</taxon>
        <taxon>Caulobacterales</taxon>
        <taxon>Caulobacteraceae</taxon>
        <taxon>Phenylobacterium</taxon>
    </lineage>
</organism>
<evidence type="ECO:0000255" key="1">
    <source>
        <dbReference type="HAMAP-Rule" id="MF_01368"/>
    </source>
</evidence>
<evidence type="ECO:0000305" key="2"/>
<protein>
    <recommendedName>
        <fullName evidence="1">Large ribosomal subunit protein bL17</fullName>
    </recommendedName>
    <alternativeName>
        <fullName evidence="2">50S ribosomal protein L17</fullName>
    </alternativeName>
</protein>
<gene>
    <name evidence="1" type="primary">rplQ</name>
    <name type="ordered locus">PHZ_c1255</name>
</gene>
<keyword id="KW-1185">Reference proteome</keyword>
<keyword id="KW-0687">Ribonucleoprotein</keyword>
<keyword id="KW-0689">Ribosomal protein</keyword>
<comment type="subunit">
    <text evidence="1">Part of the 50S ribosomal subunit. Contacts protein L32.</text>
</comment>
<comment type="similarity">
    <text evidence="1">Belongs to the bacterial ribosomal protein bL17 family.</text>
</comment>
<name>RL17_PHEZH</name>